<keyword id="KW-0056">Arginine metabolism</keyword>
<keyword id="KW-0963">Cytoplasm</keyword>
<keyword id="KW-0808">Transferase</keyword>
<comment type="function">
    <text evidence="1">Reversibly catalyzes the transfer of the carbamoyl group from carbamoyl phosphate (CP) to the N(epsilon) atom of ornithine (ORN) to produce L-citrulline.</text>
</comment>
<comment type="catalytic activity">
    <reaction evidence="2">
        <text>carbamoyl phosphate + L-ornithine = L-citrulline + phosphate + H(+)</text>
        <dbReference type="Rhea" id="RHEA:19513"/>
        <dbReference type="ChEBI" id="CHEBI:15378"/>
        <dbReference type="ChEBI" id="CHEBI:43474"/>
        <dbReference type="ChEBI" id="CHEBI:46911"/>
        <dbReference type="ChEBI" id="CHEBI:57743"/>
        <dbReference type="ChEBI" id="CHEBI:58228"/>
        <dbReference type="EC" id="2.1.3.3"/>
    </reaction>
</comment>
<comment type="pathway">
    <text evidence="2">Amino-acid degradation; L-arginine degradation via ADI pathway; carbamoyl phosphate from L-arginine: step 2/2.</text>
</comment>
<comment type="subcellular location">
    <subcellularLocation>
        <location evidence="2">Cytoplasm</location>
    </subcellularLocation>
</comment>
<comment type="similarity">
    <text evidence="2">Belongs to the aspartate/ornithine carbamoyltransferase superfamily. OTCase family.</text>
</comment>
<protein>
    <recommendedName>
        <fullName evidence="2">Ornithine carbamoyltransferase</fullName>
        <shortName evidence="2">OTCase</shortName>
        <ecNumber evidence="2">2.1.3.3</ecNumber>
    </recommendedName>
</protein>
<evidence type="ECO:0000250" key="1"/>
<evidence type="ECO:0000255" key="2">
    <source>
        <dbReference type="HAMAP-Rule" id="MF_01109"/>
    </source>
</evidence>
<accession>Q1JAR4</accession>
<organism>
    <name type="scientific">Streptococcus pyogenes serotype M12 (strain MGAS2096)</name>
    <dbReference type="NCBI Taxonomy" id="370553"/>
    <lineage>
        <taxon>Bacteria</taxon>
        <taxon>Bacillati</taxon>
        <taxon>Bacillota</taxon>
        <taxon>Bacilli</taxon>
        <taxon>Lactobacillales</taxon>
        <taxon>Streptococcaceae</taxon>
        <taxon>Streptococcus</taxon>
    </lineage>
</organism>
<dbReference type="EC" id="2.1.3.3" evidence="2"/>
<dbReference type="EMBL" id="CP000261">
    <property type="protein sequence ID" value="ABF36344.1"/>
    <property type="molecule type" value="Genomic_DNA"/>
</dbReference>
<dbReference type="SMR" id="Q1JAR4"/>
<dbReference type="KEGG" id="spj:MGAS2096_Spy1292"/>
<dbReference type="HOGENOM" id="CLU_043846_3_1_9"/>
<dbReference type="UniPathway" id="UPA00254">
    <property type="reaction ID" value="UER00365"/>
</dbReference>
<dbReference type="GO" id="GO:0005737">
    <property type="term" value="C:cytoplasm"/>
    <property type="evidence" value="ECO:0007669"/>
    <property type="project" value="UniProtKB-SubCell"/>
</dbReference>
<dbReference type="GO" id="GO:0016597">
    <property type="term" value="F:amino acid binding"/>
    <property type="evidence" value="ECO:0007669"/>
    <property type="project" value="InterPro"/>
</dbReference>
<dbReference type="GO" id="GO:0004585">
    <property type="term" value="F:ornithine carbamoyltransferase activity"/>
    <property type="evidence" value="ECO:0007669"/>
    <property type="project" value="UniProtKB-UniRule"/>
</dbReference>
<dbReference type="GO" id="GO:0042450">
    <property type="term" value="P:arginine biosynthetic process via ornithine"/>
    <property type="evidence" value="ECO:0007669"/>
    <property type="project" value="TreeGrafter"/>
</dbReference>
<dbReference type="GO" id="GO:0019547">
    <property type="term" value="P:arginine catabolic process to ornithine"/>
    <property type="evidence" value="ECO:0007669"/>
    <property type="project" value="UniProtKB-UniRule"/>
</dbReference>
<dbReference type="GO" id="GO:0019240">
    <property type="term" value="P:citrulline biosynthetic process"/>
    <property type="evidence" value="ECO:0007669"/>
    <property type="project" value="TreeGrafter"/>
</dbReference>
<dbReference type="FunFam" id="3.40.50.1370:FF:000004">
    <property type="entry name" value="Ornithine carbamoyltransferase"/>
    <property type="match status" value="1"/>
</dbReference>
<dbReference type="Gene3D" id="3.40.50.1370">
    <property type="entry name" value="Aspartate/ornithine carbamoyltransferase"/>
    <property type="match status" value="2"/>
</dbReference>
<dbReference type="HAMAP" id="MF_01109">
    <property type="entry name" value="OTCase"/>
    <property type="match status" value="1"/>
</dbReference>
<dbReference type="InterPro" id="IPR006132">
    <property type="entry name" value="Asp/Orn_carbamoyltranf_P-bd"/>
</dbReference>
<dbReference type="InterPro" id="IPR006130">
    <property type="entry name" value="Asp/Orn_carbamoylTrfase"/>
</dbReference>
<dbReference type="InterPro" id="IPR036901">
    <property type="entry name" value="Asp/Orn_carbamoylTrfase_sf"/>
</dbReference>
<dbReference type="InterPro" id="IPR006131">
    <property type="entry name" value="Asp_carbamoyltransf_Asp/Orn-bd"/>
</dbReference>
<dbReference type="InterPro" id="IPR002292">
    <property type="entry name" value="Orn/put_carbamltrans"/>
</dbReference>
<dbReference type="InterPro" id="IPR024904">
    <property type="entry name" value="OTCase_ArgI"/>
</dbReference>
<dbReference type="NCBIfam" id="TIGR00658">
    <property type="entry name" value="orni_carb_tr"/>
    <property type="match status" value="1"/>
</dbReference>
<dbReference type="NCBIfam" id="NF001986">
    <property type="entry name" value="PRK00779.1"/>
    <property type="match status" value="1"/>
</dbReference>
<dbReference type="PANTHER" id="PTHR45753:SF1">
    <property type="entry name" value="ORNITHINE CARBAMOYLTRANSFERASE, CATABOLIC"/>
    <property type="match status" value="1"/>
</dbReference>
<dbReference type="PANTHER" id="PTHR45753">
    <property type="entry name" value="ORNITHINE CARBAMOYLTRANSFERASE, MITOCHONDRIAL"/>
    <property type="match status" value="1"/>
</dbReference>
<dbReference type="Pfam" id="PF00185">
    <property type="entry name" value="OTCace"/>
    <property type="match status" value="1"/>
</dbReference>
<dbReference type="Pfam" id="PF02729">
    <property type="entry name" value="OTCace_N"/>
    <property type="match status" value="1"/>
</dbReference>
<dbReference type="PRINTS" id="PR00100">
    <property type="entry name" value="AOTCASE"/>
</dbReference>
<dbReference type="PRINTS" id="PR00102">
    <property type="entry name" value="OTCASE"/>
</dbReference>
<dbReference type="SUPFAM" id="SSF53671">
    <property type="entry name" value="Aspartate/ornithine carbamoyltransferase"/>
    <property type="match status" value="1"/>
</dbReference>
<dbReference type="PROSITE" id="PS00097">
    <property type="entry name" value="CARBAMOYLTRANSFERASE"/>
    <property type="match status" value="1"/>
</dbReference>
<proteinExistence type="inferred from homology"/>
<reference key="1">
    <citation type="journal article" date="2006" name="Proc. Natl. Acad. Sci. U.S.A.">
        <title>Molecular genetic anatomy of inter- and intraserotype variation in the human bacterial pathogen group A Streptococcus.</title>
        <authorList>
            <person name="Beres S.B."/>
            <person name="Richter E.W."/>
            <person name="Nagiec M.J."/>
            <person name="Sumby P."/>
            <person name="Porcella S.F."/>
            <person name="DeLeo F.R."/>
            <person name="Musser J.M."/>
        </authorList>
    </citation>
    <scope>NUCLEOTIDE SEQUENCE [LARGE SCALE GENOMIC DNA]</scope>
    <source>
        <strain>MGAS2096</strain>
    </source>
</reference>
<sequence>MTQVFQGRSFLAEKDFTRAELEYLIDFSAHLKDLKKRGVPHHYLEGKNIALLFEKTSTRTRAAFTTAAIDLGAHPEYLGANDIQLGKKESTEDTAKVLGRMFDGIEFRGFSQRMVEELAEFSGVPVWNGLTDEWHPTQMLADYLTVKENFGKLEGLTLVYCGDGRNNVANSLLVTGAILGVNVHIFSPKELFPEEEIVTLAEGYAKESGARILITEDADEAVKGADVLYTDVWVSMGEEDKFKERVELLQPYQVNMDLVQKAGNDKLIFLHCLPAFHDTNTVYGKDVAEKFGVKEMEVTDEVFRSKYARHFDQAENRMHTIKAVMAATLGNLFIPKV</sequence>
<feature type="chain" id="PRO_1000065123" description="Ornithine carbamoyltransferase">
    <location>
        <begin position="1"/>
        <end position="337"/>
    </location>
</feature>
<feature type="binding site" evidence="2">
    <location>
        <begin position="57"/>
        <end position="60"/>
    </location>
    <ligand>
        <name>carbamoyl phosphate</name>
        <dbReference type="ChEBI" id="CHEBI:58228"/>
    </ligand>
</feature>
<feature type="binding site" evidence="2">
    <location>
        <position position="84"/>
    </location>
    <ligand>
        <name>carbamoyl phosphate</name>
        <dbReference type="ChEBI" id="CHEBI:58228"/>
    </ligand>
</feature>
<feature type="binding site" evidence="2">
    <location>
        <position position="108"/>
    </location>
    <ligand>
        <name>carbamoyl phosphate</name>
        <dbReference type="ChEBI" id="CHEBI:58228"/>
    </ligand>
</feature>
<feature type="binding site" evidence="2">
    <location>
        <begin position="135"/>
        <end position="138"/>
    </location>
    <ligand>
        <name>carbamoyl phosphate</name>
        <dbReference type="ChEBI" id="CHEBI:58228"/>
    </ligand>
</feature>
<feature type="binding site" evidence="2">
    <location>
        <position position="167"/>
    </location>
    <ligand>
        <name>L-ornithine</name>
        <dbReference type="ChEBI" id="CHEBI:46911"/>
    </ligand>
</feature>
<feature type="binding site" evidence="2">
    <location>
        <position position="231"/>
    </location>
    <ligand>
        <name>L-ornithine</name>
        <dbReference type="ChEBI" id="CHEBI:46911"/>
    </ligand>
</feature>
<feature type="binding site" evidence="2">
    <location>
        <begin position="235"/>
        <end position="236"/>
    </location>
    <ligand>
        <name>L-ornithine</name>
        <dbReference type="ChEBI" id="CHEBI:46911"/>
    </ligand>
</feature>
<feature type="binding site" evidence="2">
    <location>
        <begin position="272"/>
        <end position="273"/>
    </location>
    <ligand>
        <name>carbamoyl phosphate</name>
        <dbReference type="ChEBI" id="CHEBI:58228"/>
    </ligand>
</feature>
<feature type="binding site" evidence="2">
    <location>
        <position position="317"/>
    </location>
    <ligand>
        <name>carbamoyl phosphate</name>
        <dbReference type="ChEBI" id="CHEBI:58228"/>
    </ligand>
</feature>
<gene>
    <name evidence="2" type="primary">arcB</name>
    <name type="ordered locus">MGAS2096_Spy1292</name>
</gene>
<name>OTC_STRPB</name>